<comment type="function">
    <text evidence="1">Stimulates cardiac output and hindgut motility, modulates visceral and skeletal muscle in many arthropods. Also inhibits activities of the human peptidase neprilysin (NEP/MME) (PubMed:26056922).</text>
</comment>
<comment type="subcellular location">
    <subcellularLocation>
        <location>Secreted</location>
    </subcellularLocation>
</comment>
<comment type="tissue specificity">
    <text evidence="2">Found in the crab pericardial organs.</text>
</comment>
<feature type="peptide" id="PRO_0000044209" description="Proctolin" evidence="2">
    <location>
        <begin position="1"/>
        <end position="5"/>
    </location>
</feature>
<keyword id="KW-0903">Direct protein sequencing</keyword>
<keyword id="KW-0378">Hydrolase</keyword>
<keyword id="KW-0527">Neuropeptide</keyword>
<keyword id="KW-0645">Protease</keyword>
<keyword id="KW-0964">Secreted</keyword>
<keyword id="KW-0720">Serine protease</keyword>
<proteinExistence type="evidence at protein level"/>
<dbReference type="GO" id="GO:0005576">
    <property type="term" value="C:extracellular region"/>
    <property type="evidence" value="ECO:0007669"/>
    <property type="project" value="UniProtKB-SubCell"/>
</dbReference>
<dbReference type="GO" id="GO:0008236">
    <property type="term" value="F:serine-type peptidase activity"/>
    <property type="evidence" value="ECO:0007669"/>
    <property type="project" value="UniProtKB-KW"/>
</dbReference>
<dbReference type="GO" id="GO:0007218">
    <property type="term" value="P:neuropeptide signaling pathway"/>
    <property type="evidence" value="ECO:0007669"/>
    <property type="project" value="UniProtKB-KW"/>
</dbReference>
<dbReference type="GO" id="GO:0006508">
    <property type="term" value="P:proteolysis"/>
    <property type="evidence" value="ECO:0007669"/>
    <property type="project" value="UniProtKB-KW"/>
</dbReference>
<sequence length="5" mass="649">RYLPT</sequence>
<protein>
    <recommendedName>
        <fullName>Proctolin</fullName>
    </recommendedName>
</protein>
<accession>P67857</accession>
<accession>P01373</accession>
<evidence type="ECO:0000269" key="1">
    <source>
    </source>
</evidence>
<evidence type="ECO:0000269" key="2">
    <source>
    </source>
</evidence>
<organism>
    <name type="scientific">Carcinus maenas</name>
    <name type="common">Common shore crab</name>
    <name type="synonym">Green crab</name>
    <dbReference type="NCBI Taxonomy" id="6759"/>
    <lineage>
        <taxon>Eukaryota</taxon>
        <taxon>Metazoa</taxon>
        <taxon>Ecdysozoa</taxon>
        <taxon>Arthropoda</taxon>
        <taxon>Crustacea</taxon>
        <taxon>Multicrustacea</taxon>
        <taxon>Malacostraca</taxon>
        <taxon>Eumalacostraca</taxon>
        <taxon>Eucarida</taxon>
        <taxon>Decapoda</taxon>
        <taxon>Pleocyemata</taxon>
        <taxon>Brachyura</taxon>
        <taxon>Eubrachyura</taxon>
        <taxon>Portunoidea</taxon>
        <taxon>Carcinidae</taxon>
        <taxon>Carcinus</taxon>
    </lineage>
</organism>
<reference key="1">
    <citation type="journal article" date="1986" name="Peptides">
        <title>Identification and immunocytochemical localization of proctolin in pericardial organs of the shore crab, Carcinus maenas.</title>
        <authorList>
            <person name="Stangier J."/>
            <person name="Dircksen H."/>
            <person name="Keller R."/>
        </authorList>
    </citation>
    <scope>PROTEIN SEQUENCE</scope>
    <scope>TISSUE SPECIFICITY</scope>
</reference>
<reference key="2">
    <citation type="journal article" date="2016" name="Peptides">
        <title>[des-Arg(1)]-proctolin: a novel NEP-like enzyme inhibitor identified in Tityus serrulatus venom.</title>
        <authorList>
            <person name="Duzzi B."/>
            <person name="Cajado-Carvalho D."/>
            <person name="Kuniyoshi A.K."/>
            <person name="Kodama R.T."/>
            <person name="Gozzo F.C."/>
            <person name="Fioramonte M."/>
            <person name="Tambourgi D.V."/>
            <person name="Portaro F.V."/>
            <person name="Rioli V."/>
        </authorList>
    </citation>
    <scope>FUNCTION</scope>
    <scope>SYNTHESIS</scope>
</reference>
<name>PRCT_CARMA</name>